<evidence type="ECO:0000255" key="1">
    <source>
        <dbReference type="HAMAP-Rule" id="MF_01678"/>
    </source>
</evidence>
<evidence type="ECO:0000305" key="2"/>
<feature type="chain" id="PRO_0000156097" description="Methylthioribose-1-phosphate isomerase">
    <location>
        <begin position="1"/>
        <end position="358"/>
    </location>
</feature>
<feature type="active site" description="Proton donor" evidence="1">
    <location>
        <position position="246"/>
    </location>
</feature>
<feature type="binding site" evidence="1">
    <location>
        <begin position="54"/>
        <end position="56"/>
    </location>
    <ligand>
        <name>substrate</name>
    </ligand>
</feature>
<feature type="binding site" evidence="1">
    <location>
        <position position="96"/>
    </location>
    <ligand>
        <name>substrate</name>
    </ligand>
</feature>
<feature type="binding site" evidence="1">
    <location>
        <position position="205"/>
    </location>
    <ligand>
        <name>substrate</name>
    </ligand>
</feature>
<feature type="binding site" evidence="1">
    <location>
        <begin position="256"/>
        <end position="257"/>
    </location>
    <ligand>
        <name>substrate</name>
    </ligand>
</feature>
<feature type="site" description="Transition state stabilizer" evidence="1">
    <location>
        <position position="166"/>
    </location>
</feature>
<dbReference type="EC" id="5.3.1.23" evidence="1"/>
<dbReference type="EMBL" id="AE004091">
    <property type="protein sequence ID" value="AAG06557.1"/>
    <property type="molecule type" value="Genomic_DNA"/>
</dbReference>
<dbReference type="PIR" id="A83249">
    <property type="entry name" value="A83249"/>
</dbReference>
<dbReference type="RefSeq" id="NP_251859.1">
    <property type="nucleotide sequence ID" value="NC_002516.2"/>
</dbReference>
<dbReference type="RefSeq" id="WP_003091449.1">
    <property type="nucleotide sequence ID" value="NZ_QZGE01000023.1"/>
</dbReference>
<dbReference type="SMR" id="Q9HZ65"/>
<dbReference type="STRING" id="208964.PA3169"/>
<dbReference type="PaxDb" id="208964-PA3169"/>
<dbReference type="DNASU" id="882801"/>
<dbReference type="GeneID" id="882801"/>
<dbReference type="KEGG" id="pae:PA3169"/>
<dbReference type="PATRIC" id="fig|208964.12.peg.3312"/>
<dbReference type="PseudoCAP" id="PA3169"/>
<dbReference type="HOGENOM" id="CLU_016218_1_2_6"/>
<dbReference type="InParanoid" id="Q9HZ65"/>
<dbReference type="OrthoDB" id="9803436at2"/>
<dbReference type="PhylomeDB" id="Q9HZ65"/>
<dbReference type="BioCyc" id="PAER208964:G1FZ6-3229-MONOMER"/>
<dbReference type="UniPathway" id="UPA00904">
    <property type="reaction ID" value="UER00874"/>
</dbReference>
<dbReference type="Proteomes" id="UP000002438">
    <property type="component" value="Chromosome"/>
</dbReference>
<dbReference type="GO" id="GO:0046523">
    <property type="term" value="F:S-methyl-5-thioribose-1-phosphate isomerase activity"/>
    <property type="evidence" value="ECO:0000318"/>
    <property type="project" value="GO_Central"/>
</dbReference>
<dbReference type="GO" id="GO:0019509">
    <property type="term" value="P:L-methionine salvage from methylthioadenosine"/>
    <property type="evidence" value="ECO:0000318"/>
    <property type="project" value="GO_Central"/>
</dbReference>
<dbReference type="FunFam" id="1.20.120.420:FF:000008">
    <property type="entry name" value="Methylthioribose-1-phosphate isomerase"/>
    <property type="match status" value="1"/>
</dbReference>
<dbReference type="FunFam" id="3.40.50.10470:FF:000006">
    <property type="entry name" value="Methylthioribose-1-phosphate isomerase"/>
    <property type="match status" value="1"/>
</dbReference>
<dbReference type="Gene3D" id="1.20.120.420">
    <property type="entry name" value="translation initiation factor eif-2b, domain 1"/>
    <property type="match status" value="1"/>
</dbReference>
<dbReference type="Gene3D" id="3.40.50.10470">
    <property type="entry name" value="Translation initiation factor eif-2b, domain 2"/>
    <property type="match status" value="1"/>
</dbReference>
<dbReference type="HAMAP" id="MF_01678">
    <property type="entry name" value="Salvage_MtnA"/>
    <property type="match status" value="1"/>
</dbReference>
<dbReference type="InterPro" id="IPR000649">
    <property type="entry name" value="IF-2B-related"/>
</dbReference>
<dbReference type="InterPro" id="IPR005251">
    <property type="entry name" value="IF-M1Pi"/>
</dbReference>
<dbReference type="InterPro" id="IPR042529">
    <property type="entry name" value="IF_2B-like_C"/>
</dbReference>
<dbReference type="InterPro" id="IPR011559">
    <property type="entry name" value="Initiation_fac_2B_a/b/d"/>
</dbReference>
<dbReference type="InterPro" id="IPR027363">
    <property type="entry name" value="M1Pi_N"/>
</dbReference>
<dbReference type="InterPro" id="IPR037171">
    <property type="entry name" value="NagB/RpiA_transferase-like"/>
</dbReference>
<dbReference type="NCBIfam" id="TIGR00524">
    <property type="entry name" value="eIF-2B_rel"/>
    <property type="match status" value="1"/>
</dbReference>
<dbReference type="NCBIfam" id="NF004326">
    <property type="entry name" value="PRK05720.1"/>
    <property type="match status" value="1"/>
</dbReference>
<dbReference type="NCBIfam" id="TIGR00512">
    <property type="entry name" value="salvage_mtnA"/>
    <property type="match status" value="1"/>
</dbReference>
<dbReference type="PANTHER" id="PTHR43475">
    <property type="entry name" value="METHYLTHIORIBOSE-1-PHOSPHATE ISOMERASE"/>
    <property type="match status" value="1"/>
</dbReference>
<dbReference type="PANTHER" id="PTHR43475:SF1">
    <property type="entry name" value="METHYLTHIORIBOSE-1-PHOSPHATE ISOMERASE"/>
    <property type="match status" value="1"/>
</dbReference>
<dbReference type="Pfam" id="PF01008">
    <property type="entry name" value="IF-2B"/>
    <property type="match status" value="1"/>
</dbReference>
<dbReference type="SUPFAM" id="SSF100950">
    <property type="entry name" value="NagB/RpiA/CoA transferase-like"/>
    <property type="match status" value="1"/>
</dbReference>
<comment type="function">
    <text evidence="1">Catalyzes the interconversion of methylthioribose-1-phosphate (MTR-1-P) into methylthioribulose-1-phosphate (MTRu-1-P).</text>
</comment>
<comment type="catalytic activity">
    <reaction evidence="1">
        <text>5-(methylsulfanyl)-alpha-D-ribose 1-phosphate = 5-(methylsulfanyl)-D-ribulose 1-phosphate</text>
        <dbReference type="Rhea" id="RHEA:19989"/>
        <dbReference type="ChEBI" id="CHEBI:58533"/>
        <dbReference type="ChEBI" id="CHEBI:58548"/>
        <dbReference type="EC" id="5.3.1.23"/>
    </reaction>
</comment>
<comment type="pathway">
    <text evidence="1">Amino-acid biosynthesis; L-methionine biosynthesis via salvage pathway; L-methionine from S-methyl-5-thio-alpha-D-ribose 1-phosphate: step 1/6.</text>
</comment>
<comment type="similarity">
    <text evidence="2">Belongs to the eIF-2B alpha/beta/delta subunits family. MtnA subfamily.</text>
</comment>
<gene>
    <name evidence="1" type="primary">mtnA</name>
    <name type="ordered locus">PA3169</name>
</gene>
<name>MTNA_PSEAE</name>
<organism>
    <name type="scientific">Pseudomonas aeruginosa (strain ATCC 15692 / DSM 22644 / CIP 104116 / JCM 14847 / LMG 12228 / 1C / PRS 101 / PAO1)</name>
    <dbReference type="NCBI Taxonomy" id="208964"/>
    <lineage>
        <taxon>Bacteria</taxon>
        <taxon>Pseudomonadati</taxon>
        <taxon>Pseudomonadota</taxon>
        <taxon>Gammaproteobacteria</taxon>
        <taxon>Pseudomonadales</taxon>
        <taxon>Pseudomonadaceae</taxon>
        <taxon>Pseudomonas</taxon>
    </lineage>
</organism>
<accession>Q9HZ65</accession>
<reference key="1">
    <citation type="journal article" date="2000" name="Nature">
        <title>Complete genome sequence of Pseudomonas aeruginosa PAO1, an opportunistic pathogen.</title>
        <authorList>
            <person name="Stover C.K."/>
            <person name="Pham X.-Q.T."/>
            <person name="Erwin A.L."/>
            <person name="Mizoguchi S.D."/>
            <person name="Warrener P."/>
            <person name="Hickey M.J."/>
            <person name="Brinkman F.S.L."/>
            <person name="Hufnagle W.O."/>
            <person name="Kowalik D.J."/>
            <person name="Lagrou M."/>
            <person name="Garber R.L."/>
            <person name="Goltry L."/>
            <person name="Tolentino E."/>
            <person name="Westbrock-Wadman S."/>
            <person name="Yuan Y."/>
            <person name="Brody L.L."/>
            <person name="Coulter S.N."/>
            <person name="Folger K.R."/>
            <person name="Kas A."/>
            <person name="Larbig K."/>
            <person name="Lim R.M."/>
            <person name="Smith K.A."/>
            <person name="Spencer D.H."/>
            <person name="Wong G.K.-S."/>
            <person name="Wu Z."/>
            <person name="Paulsen I.T."/>
            <person name="Reizer J."/>
            <person name="Saier M.H. Jr."/>
            <person name="Hancock R.E.W."/>
            <person name="Lory S."/>
            <person name="Olson M.V."/>
        </authorList>
    </citation>
    <scope>NUCLEOTIDE SEQUENCE [LARGE SCALE GENOMIC DNA]</scope>
    <source>
        <strain>ATCC 15692 / DSM 22644 / CIP 104116 / JCM 14847 / LMG 12228 / 1C / PRS 101 / PAO1</strain>
    </source>
</reference>
<protein>
    <recommendedName>
        <fullName evidence="1">Methylthioribose-1-phosphate isomerase</fullName>
        <shortName evidence="1">M1Pi</shortName>
        <shortName evidence="1">MTR-1-P isomerase</shortName>
        <ecNumber evidence="1">5.3.1.23</ecNumber>
    </recommendedName>
    <alternativeName>
        <fullName evidence="1">S-methyl-5-thioribose-1-phosphate isomerase</fullName>
    </alternativeName>
</protein>
<keyword id="KW-0028">Amino-acid biosynthesis</keyword>
<keyword id="KW-0413">Isomerase</keyword>
<keyword id="KW-0486">Methionine biosynthesis</keyword>
<keyword id="KW-1185">Reference proteome</keyword>
<proteinExistence type="inferred from homology"/>
<sequence length="358" mass="39425">MRERLLAAERVKAIEWRDGTLRLLDQRLLPQEEVWLEHESAAEVAKAIRDMVVRGAPAIGISAAYGIVLGARARLAQGGDWRAALEEDFRLLADSRPTAVNLFWALNRMRDRLERMKEGDQPLAVLEAEAISIHESDREANLTMAQLGMELIRKQQGSPQNILTHCNTGALATGGFGTALGVIRAAHLEGLVNRIYADETRPWLQGSRLTAWELANEGIPVSLNVDSAAAHLMKTENITWVIVGADRITANGDVANKIGTYQLAVNAMHHGVRFMVVAPSSTIDMNLESGEDIPIEERDGRELLEIGGRRVAAEVDAYNPVFDVTPADLIDAIVTERGVVERPDAERMAALMSRKRLH</sequence>